<protein>
    <recommendedName>
        <fullName>DNA polymerase III subunit epsilon</fullName>
        <ecNumber>2.7.7.7</ecNumber>
    </recommendedName>
</protein>
<evidence type="ECO:0000250" key="1"/>
<proteinExistence type="inferred from homology"/>
<comment type="function">
    <text evidence="1">DNA polymerase III is a complex, multichain enzyme responsible for most of the replicative synthesis in bacteria. The epsilon subunit contain the editing function and is a proofreading 3'-5' exonuclease (By similarity).</text>
</comment>
<comment type="catalytic activity">
    <reaction>
        <text>DNA(n) + a 2'-deoxyribonucleoside 5'-triphosphate = DNA(n+1) + diphosphate</text>
        <dbReference type="Rhea" id="RHEA:22508"/>
        <dbReference type="Rhea" id="RHEA-COMP:17339"/>
        <dbReference type="Rhea" id="RHEA-COMP:17340"/>
        <dbReference type="ChEBI" id="CHEBI:33019"/>
        <dbReference type="ChEBI" id="CHEBI:61560"/>
        <dbReference type="ChEBI" id="CHEBI:173112"/>
        <dbReference type="EC" id="2.7.7.7"/>
    </reaction>
</comment>
<comment type="cofactor">
    <cofactor evidence="1">
        <name>Mg(2+)</name>
        <dbReference type="ChEBI" id="CHEBI:18420"/>
    </cofactor>
    <cofactor evidence="1">
        <name>Mn(2+)</name>
        <dbReference type="ChEBI" id="CHEBI:29035"/>
    </cofactor>
    <text evidence="1">Binds 2 divalent metal cations. Magnesium or manganese.</text>
</comment>
<comment type="subunit">
    <text evidence="1">DNA polymerase III contains a core (composed of alpha, epsilon and theta chains) that associates with a tau subunit. This core dimerizes to form the POLIII' complex. PolIII' associates with the gamma complex (composed of gamma, delta, delta', psi and chi chains) and with the beta chain to form the complete DNA polymerase III complex (By similarity).</text>
</comment>
<sequence length="229" mass="26078">MSSLREIILDTETTGLDPQQGHRIVEIGAIEMVNKVLTGKHFHFYINPERDMPFEAYKIHGISGEFLKDKPLFKTIANDFLKFIADSTLIIHNAPFDIKFLNHELSLLKRTEIKFLELTNTIDTLVMARNMFPGARYSLDALCKRFKVDNSGRQLHGALKDAALLAEVYVALTGGRQSTFKMINKPDEINNLAVKCVDVQQIKRGIVVKPTKEELQKHKEFIDKILIQA</sequence>
<organism>
    <name type="scientific">Rickettsia prowazekii (strain Madrid E)</name>
    <dbReference type="NCBI Taxonomy" id="272947"/>
    <lineage>
        <taxon>Bacteria</taxon>
        <taxon>Pseudomonadati</taxon>
        <taxon>Pseudomonadota</taxon>
        <taxon>Alphaproteobacteria</taxon>
        <taxon>Rickettsiales</taxon>
        <taxon>Rickettsiaceae</taxon>
        <taxon>Rickettsieae</taxon>
        <taxon>Rickettsia</taxon>
        <taxon>typhus group</taxon>
    </lineage>
</organism>
<keyword id="KW-0235">DNA replication</keyword>
<keyword id="KW-0239">DNA-directed DNA polymerase</keyword>
<keyword id="KW-0269">Exonuclease</keyword>
<keyword id="KW-0378">Hydrolase</keyword>
<keyword id="KW-0460">Magnesium</keyword>
<keyword id="KW-0464">Manganese</keyword>
<keyword id="KW-0479">Metal-binding</keyword>
<keyword id="KW-0540">Nuclease</keyword>
<keyword id="KW-0548">Nucleotidyltransferase</keyword>
<keyword id="KW-1185">Reference proteome</keyword>
<keyword id="KW-0808">Transferase</keyword>
<accession>Q9ZCJ9</accession>
<dbReference type="EC" id="2.7.7.7"/>
<dbReference type="EMBL" id="AJ235273">
    <property type="protein sequence ID" value="CAA15161.1"/>
    <property type="molecule type" value="Genomic_DNA"/>
</dbReference>
<dbReference type="PIR" id="A71633">
    <property type="entry name" value="A71633"/>
</dbReference>
<dbReference type="RefSeq" id="NP_221085.1">
    <property type="nucleotide sequence ID" value="NC_000963.1"/>
</dbReference>
<dbReference type="RefSeq" id="WP_004597036.1">
    <property type="nucleotide sequence ID" value="NC_000963.1"/>
</dbReference>
<dbReference type="SMR" id="Q9ZCJ9"/>
<dbReference type="STRING" id="272947.gene:17555802"/>
<dbReference type="EnsemblBacteria" id="CAA15161">
    <property type="protein sequence ID" value="CAA15161"/>
    <property type="gene ID" value="CAA15161"/>
</dbReference>
<dbReference type="GeneID" id="57569853"/>
<dbReference type="KEGG" id="rpr:RP732"/>
<dbReference type="PATRIC" id="fig|272947.5.peg.766"/>
<dbReference type="eggNOG" id="COG0847">
    <property type="taxonomic scope" value="Bacteria"/>
</dbReference>
<dbReference type="HOGENOM" id="CLU_047806_2_1_5"/>
<dbReference type="OrthoDB" id="9804290at2"/>
<dbReference type="Proteomes" id="UP000002480">
    <property type="component" value="Chromosome"/>
</dbReference>
<dbReference type="GO" id="GO:0005829">
    <property type="term" value="C:cytosol"/>
    <property type="evidence" value="ECO:0007669"/>
    <property type="project" value="TreeGrafter"/>
</dbReference>
<dbReference type="GO" id="GO:0008408">
    <property type="term" value="F:3'-5' exonuclease activity"/>
    <property type="evidence" value="ECO:0007669"/>
    <property type="project" value="TreeGrafter"/>
</dbReference>
<dbReference type="GO" id="GO:0003677">
    <property type="term" value="F:DNA binding"/>
    <property type="evidence" value="ECO:0007669"/>
    <property type="project" value="InterPro"/>
</dbReference>
<dbReference type="GO" id="GO:0003887">
    <property type="term" value="F:DNA-directed DNA polymerase activity"/>
    <property type="evidence" value="ECO:0007669"/>
    <property type="project" value="UniProtKB-KW"/>
</dbReference>
<dbReference type="GO" id="GO:0046872">
    <property type="term" value="F:metal ion binding"/>
    <property type="evidence" value="ECO:0007669"/>
    <property type="project" value="UniProtKB-KW"/>
</dbReference>
<dbReference type="GO" id="GO:0045004">
    <property type="term" value="P:DNA replication proofreading"/>
    <property type="evidence" value="ECO:0007669"/>
    <property type="project" value="TreeGrafter"/>
</dbReference>
<dbReference type="CDD" id="cd06131">
    <property type="entry name" value="DNA_pol_III_epsilon_Ecoli_like"/>
    <property type="match status" value="1"/>
</dbReference>
<dbReference type="FunFam" id="3.30.420.10:FF:000012">
    <property type="entry name" value="DNA polymerase III subunit epsilon"/>
    <property type="match status" value="1"/>
</dbReference>
<dbReference type="Gene3D" id="3.30.420.10">
    <property type="entry name" value="Ribonuclease H-like superfamily/Ribonuclease H"/>
    <property type="match status" value="1"/>
</dbReference>
<dbReference type="InterPro" id="IPR006054">
    <property type="entry name" value="DnaQ"/>
</dbReference>
<dbReference type="InterPro" id="IPR006309">
    <property type="entry name" value="DnaQ_proteo"/>
</dbReference>
<dbReference type="InterPro" id="IPR013520">
    <property type="entry name" value="Exonuclease_RNaseT/DNA_pol3"/>
</dbReference>
<dbReference type="InterPro" id="IPR012337">
    <property type="entry name" value="RNaseH-like_sf"/>
</dbReference>
<dbReference type="InterPro" id="IPR036397">
    <property type="entry name" value="RNaseH_sf"/>
</dbReference>
<dbReference type="NCBIfam" id="TIGR00573">
    <property type="entry name" value="dnaq"/>
    <property type="match status" value="1"/>
</dbReference>
<dbReference type="NCBIfam" id="TIGR01406">
    <property type="entry name" value="dnaQ_proteo"/>
    <property type="match status" value="1"/>
</dbReference>
<dbReference type="NCBIfam" id="NF004316">
    <property type="entry name" value="PRK05711.1"/>
    <property type="match status" value="1"/>
</dbReference>
<dbReference type="PANTHER" id="PTHR30231">
    <property type="entry name" value="DNA POLYMERASE III SUBUNIT EPSILON"/>
    <property type="match status" value="1"/>
</dbReference>
<dbReference type="PANTHER" id="PTHR30231:SF41">
    <property type="entry name" value="DNA POLYMERASE III SUBUNIT EPSILON"/>
    <property type="match status" value="1"/>
</dbReference>
<dbReference type="Pfam" id="PF00929">
    <property type="entry name" value="RNase_T"/>
    <property type="match status" value="1"/>
</dbReference>
<dbReference type="SMART" id="SM00479">
    <property type="entry name" value="EXOIII"/>
    <property type="match status" value="1"/>
</dbReference>
<dbReference type="SUPFAM" id="SSF53098">
    <property type="entry name" value="Ribonuclease H-like"/>
    <property type="match status" value="1"/>
</dbReference>
<reference key="1">
    <citation type="journal article" date="1998" name="Nature">
        <title>The genome sequence of Rickettsia prowazekii and the origin of mitochondria.</title>
        <authorList>
            <person name="Andersson S.G.E."/>
            <person name="Zomorodipour A."/>
            <person name="Andersson J.O."/>
            <person name="Sicheritz-Ponten T."/>
            <person name="Alsmark U.C.M."/>
            <person name="Podowski R.M."/>
            <person name="Naeslund A.K."/>
            <person name="Eriksson A.-S."/>
            <person name="Winkler H.H."/>
            <person name="Kurland C.G."/>
        </authorList>
    </citation>
    <scope>NUCLEOTIDE SEQUENCE [LARGE SCALE GENOMIC DNA]</scope>
    <source>
        <strain>Madrid E</strain>
    </source>
</reference>
<gene>
    <name type="primary">dnaQ</name>
    <name type="ordered locus">RP732</name>
</gene>
<name>DPO3E_RICPR</name>
<feature type="chain" id="PRO_0000105489" description="DNA polymerase III subunit epsilon">
    <location>
        <begin position="1"/>
        <end position="229"/>
    </location>
</feature>
<feature type="active site" description="Proton acceptor" evidence="1">
    <location>
        <position position="156"/>
    </location>
</feature>
<feature type="binding site" evidence="1">
    <location>
        <position position="10"/>
    </location>
    <ligand>
        <name>a divalent metal cation</name>
        <dbReference type="ChEBI" id="CHEBI:60240"/>
        <label>1</label>
        <note>catalytic</note>
    </ligand>
</feature>
<feature type="binding site" evidence="1">
    <location>
        <position position="10"/>
    </location>
    <ligand>
        <name>a divalent metal cation</name>
        <dbReference type="ChEBI" id="CHEBI:60240"/>
        <label>2</label>
        <note>catalytic</note>
    </ligand>
</feature>
<feature type="binding site" evidence="1">
    <location>
        <position position="10"/>
    </location>
    <ligand>
        <name>substrate</name>
    </ligand>
</feature>
<feature type="binding site" evidence="1">
    <location>
        <position position="12"/>
    </location>
    <ligand>
        <name>a divalent metal cation</name>
        <dbReference type="ChEBI" id="CHEBI:60240"/>
        <label>1</label>
        <note>catalytic</note>
    </ligand>
</feature>
<feature type="binding site" evidence="1">
    <location>
        <position position="12"/>
    </location>
    <ligand>
        <name>substrate</name>
    </ligand>
</feature>
<feature type="binding site" evidence="1">
    <location>
        <position position="55"/>
    </location>
    <ligand>
        <name>substrate</name>
    </ligand>
</feature>
<feature type="binding site" evidence="1">
    <location>
        <position position="60"/>
    </location>
    <ligand>
        <name>substrate</name>
    </ligand>
</feature>
<feature type="binding site" evidence="1">
    <location>
        <position position="161"/>
    </location>
    <ligand>
        <name>a divalent metal cation</name>
        <dbReference type="ChEBI" id="CHEBI:60240"/>
        <label>1</label>
        <note>catalytic</note>
    </ligand>
</feature>
<feature type="binding site" evidence="1">
    <location>
        <position position="161"/>
    </location>
    <ligand>
        <name>substrate</name>
    </ligand>
</feature>